<protein>
    <recommendedName>
        <fullName evidence="1">UDP-4-amino-4-deoxy-L-arabinose--oxoglutarate aminotransferase</fullName>
        <ecNumber evidence="1">2.6.1.87</ecNumber>
    </recommendedName>
    <alternativeName>
        <fullName evidence="1">UDP-(beta-L-threo-pentapyranosyl-4''-ulose diphosphate) aminotransferase</fullName>
        <shortName evidence="1">UDP-Ara4O aminotransferase</shortName>
    </alternativeName>
    <alternativeName>
        <fullName evidence="1">UDP-4-amino-4-deoxy-L-arabinose aminotransferase</fullName>
    </alternativeName>
</protein>
<evidence type="ECO:0000255" key="1">
    <source>
        <dbReference type="HAMAP-Rule" id="MF_01167"/>
    </source>
</evidence>
<comment type="function">
    <text evidence="1">Catalyzes the conversion of UDP-4-keto-arabinose (UDP-Ara4O) to UDP-4-amino-4-deoxy-L-arabinose (UDP-L-Ara4N). The modified arabinose is attached to lipid A and is required for resistance to polymyxin and cationic antimicrobial peptides.</text>
</comment>
<comment type="catalytic activity">
    <reaction evidence="1">
        <text>UDP-4-amino-4-deoxy-beta-L-arabinose + 2-oxoglutarate = UDP-beta-L-threo-pentopyranos-4-ulose + L-glutamate</text>
        <dbReference type="Rhea" id="RHEA:24710"/>
        <dbReference type="ChEBI" id="CHEBI:16810"/>
        <dbReference type="ChEBI" id="CHEBI:29985"/>
        <dbReference type="ChEBI" id="CHEBI:58708"/>
        <dbReference type="ChEBI" id="CHEBI:58710"/>
        <dbReference type="EC" id="2.6.1.87"/>
    </reaction>
</comment>
<comment type="cofactor">
    <cofactor evidence="1">
        <name>pyridoxal 5'-phosphate</name>
        <dbReference type="ChEBI" id="CHEBI:597326"/>
    </cofactor>
</comment>
<comment type="pathway">
    <text evidence="1">Nucleotide-sugar biosynthesis; UDP-4-deoxy-4-formamido-beta-L-arabinose biosynthesis; UDP-4-deoxy-4-formamido-beta-L-arabinose from UDP-alpha-D-glucuronate: step 2/3.</text>
</comment>
<comment type="pathway">
    <text evidence="1">Bacterial outer membrane biogenesis; lipopolysaccharide biosynthesis.</text>
</comment>
<comment type="subunit">
    <text evidence="1">Homodimer.</text>
</comment>
<comment type="similarity">
    <text evidence="1">Belongs to the DegT/DnrJ/EryC1 family. ArnB subfamily.</text>
</comment>
<reference key="1">
    <citation type="journal article" date="2008" name="Environ. Microbiol.">
        <title>The genome of Erwinia tasmaniensis strain Et1/99, a non-pathogenic bacterium in the genus Erwinia.</title>
        <authorList>
            <person name="Kube M."/>
            <person name="Migdoll A.M."/>
            <person name="Mueller I."/>
            <person name="Kuhl H."/>
            <person name="Beck A."/>
            <person name="Reinhardt R."/>
            <person name="Geider K."/>
        </authorList>
    </citation>
    <scope>NUCLEOTIDE SEQUENCE [LARGE SCALE GENOMIC DNA]</scope>
    <source>
        <strain>DSM 17950 / CFBP 7177 / CIP 109463 / NCPPB 4357 / Et1/99</strain>
    </source>
</reference>
<keyword id="KW-0032">Aminotransferase</keyword>
<keyword id="KW-0046">Antibiotic resistance</keyword>
<keyword id="KW-0441">Lipid A biosynthesis</keyword>
<keyword id="KW-0444">Lipid biosynthesis</keyword>
<keyword id="KW-0443">Lipid metabolism</keyword>
<keyword id="KW-0448">Lipopolysaccharide biosynthesis</keyword>
<keyword id="KW-0663">Pyridoxal phosphate</keyword>
<keyword id="KW-1185">Reference proteome</keyword>
<keyword id="KW-0808">Transferase</keyword>
<organism>
    <name type="scientific">Erwinia tasmaniensis (strain DSM 17950 / CFBP 7177 / CIP 109463 / NCPPB 4357 / Et1/99)</name>
    <dbReference type="NCBI Taxonomy" id="465817"/>
    <lineage>
        <taxon>Bacteria</taxon>
        <taxon>Pseudomonadati</taxon>
        <taxon>Pseudomonadota</taxon>
        <taxon>Gammaproteobacteria</taxon>
        <taxon>Enterobacterales</taxon>
        <taxon>Erwiniaceae</taxon>
        <taxon>Erwinia</taxon>
    </lineage>
</organism>
<feature type="chain" id="PRO_1000137957" description="UDP-4-amino-4-deoxy-L-arabinose--oxoglutarate aminotransferase">
    <location>
        <begin position="1"/>
        <end position="379"/>
    </location>
</feature>
<feature type="modified residue" description="N6-(pyridoxal phosphate)lysine" evidence="1">
    <location>
        <position position="182"/>
    </location>
</feature>
<sequence length="379" mass="41561">MSEFLPFSRPAMGSEELAAVEEVLRSGWITTGPKNQQLEQAFCRLTGNRHAIAVCSATAGMHVALMALGIGPGDEVITPSLTWVSTLNMIALLGATPVMIDVDRDTLMVTPELIEAAITERTRAIVPVHYAGAPADIDAVHALGKRHGIAVIDDAAHAAGTYYRGRHVGESGTAIFSFHAIKNMSCAEGGMIVTDDDALADRMRSLKFHGLGVDAFDRQTHGRAPQAEVLTPGYKYNLADINAAIALVQLDKLAAHNARREQIAQRYLSELADTPFLPLARPAWPHQHAWHLFILRVDRESCGLSRDELMQQLKEQGIGTGLHFRAAHTQKYYRDRFPQLSLPETEWNSERICSIPLFPGMSDGDCDRVIAALRTLAER</sequence>
<name>ARNB_ERWT9</name>
<accession>B2VBJ1</accession>
<dbReference type="EC" id="2.6.1.87" evidence="1"/>
<dbReference type="EMBL" id="CU468135">
    <property type="protein sequence ID" value="CAO97429.1"/>
    <property type="molecule type" value="Genomic_DNA"/>
</dbReference>
<dbReference type="RefSeq" id="WP_012442097.1">
    <property type="nucleotide sequence ID" value="NC_010694.1"/>
</dbReference>
<dbReference type="SMR" id="B2VBJ1"/>
<dbReference type="STRING" id="465817.ETA_23830"/>
<dbReference type="KEGG" id="eta:ETA_23830"/>
<dbReference type="eggNOG" id="COG0399">
    <property type="taxonomic scope" value="Bacteria"/>
</dbReference>
<dbReference type="HOGENOM" id="CLU_033332_0_3_6"/>
<dbReference type="OrthoDB" id="9804264at2"/>
<dbReference type="UniPathway" id="UPA00030"/>
<dbReference type="UniPathway" id="UPA00032">
    <property type="reaction ID" value="UER00493"/>
</dbReference>
<dbReference type="Proteomes" id="UP000001726">
    <property type="component" value="Chromosome"/>
</dbReference>
<dbReference type="GO" id="GO:0016020">
    <property type="term" value="C:membrane"/>
    <property type="evidence" value="ECO:0007669"/>
    <property type="project" value="GOC"/>
</dbReference>
<dbReference type="GO" id="GO:0030170">
    <property type="term" value="F:pyridoxal phosphate binding"/>
    <property type="evidence" value="ECO:0007669"/>
    <property type="project" value="TreeGrafter"/>
</dbReference>
<dbReference type="GO" id="GO:0099620">
    <property type="term" value="F:UDP-4-amino-4-deoxy-L-arabinose aminotransferase"/>
    <property type="evidence" value="ECO:0007669"/>
    <property type="project" value="UniProtKB-EC"/>
</dbReference>
<dbReference type="GO" id="GO:0009245">
    <property type="term" value="P:lipid A biosynthetic process"/>
    <property type="evidence" value="ECO:0007669"/>
    <property type="project" value="UniProtKB-KW"/>
</dbReference>
<dbReference type="GO" id="GO:0009103">
    <property type="term" value="P:lipopolysaccharide biosynthetic process"/>
    <property type="evidence" value="ECO:0007669"/>
    <property type="project" value="UniProtKB-UniRule"/>
</dbReference>
<dbReference type="GO" id="GO:0046677">
    <property type="term" value="P:response to antibiotic"/>
    <property type="evidence" value="ECO:0007669"/>
    <property type="project" value="UniProtKB-KW"/>
</dbReference>
<dbReference type="CDD" id="cd00616">
    <property type="entry name" value="AHBA_syn"/>
    <property type="match status" value="1"/>
</dbReference>
<dbReference type="FunFam" id="3.40.640.10:FF:000040">
    <property type="entry name" value="UDP-4-amino-4-deoxy-L-arabinose--oxoglutarate aminotransferase"/>
    <property type="match status" value="1"/>
</dbReference>
<dbReference type="FunFam" id="3.90.1150.10:FF:000030">
    <property type="entry name" value="UDP-4-amino-4-deoxy-L-arabinose--oxoglutarate aminotransferase"/>
    <property type="match status" value="1"/>
</dbReference>
<dbReference type="Gene3D" id="3.90.1150.10">
    <property type="entry name" value="Aspartate Aminotransferase, domain 1"/>
    <property type="match status" value="1"/>
</dbReference>
<dbReference type="Gene3D" id="3.40.640.10">
    <property type="entry name" value="Type I PLP-dependent aspartate aminotransferase-like (Major domain)"/>
    <property type="match status" value="1"/>
</dbReference>
<dbReference type="HAMAP" id="MF_01167">
    <property type="entry name" value="ArnB_transfer"/>
    <property type="match status" value="1"/>
</dbReference>
<dbReference type="InterPro" id="IPR022850">
    <property type="entry name" value="ArnB_NH2Trfase"/>
</dbReference>
<dbReference type="InterPro" id="IPR000653">
    <property type="entry name" value="DegT/StrS_aminotransferase"/>
</dbReference>
<dbReference type="InterPro" id="IPR015424">
    <property type="entry name" value="PyrdxlP-dep_Trfase"/>
</dbReference>
<dbReference type="InterPro" id="IPR015421">
    <property type="entry name" value="PyrdxlP-dep_Trfase_major"/>
</dbReference>
<dbReference type="InterPro" id="IPR015422">
    <property type="entry name" value="PyrdxlP-dep_Trfase_small"/>
</dbReference>
<dbReference type="NCBIfam" id="NF008658">
    <property type="entry name" value="PRK11658.1"/>
    <property type="match status" value="1"/>
</dbReference>
<dbReference type="PANTHER" id="PTHR30244">
    <property type="entry name" value="TRANSAMINASE"/>
    <property type="match status" value="1"/>
</dbReference>
<dbReference type="PANTHER" id="PTHR30244:SF41">
    <property type="entry name" value="UDP-4-AMINO-4-DEOXY-L-ARABINOSE--OXOGLUTARATE AMINOTRANSFERASE"/>
    <property type="match status" value="1"/>
</dbReference>
<dbReference type="Pfam" id="PF01041">
    <property type="entry name" value="DegT_DnrJ_EryC1"/>
    <property type="match status" value="1"/>
</dbReference>
<dbReference type="PIRSF" id="PIRSF000390">
    <property type="entry name" value="PLP_StrS"/>
    <property type="match status" value="1"/>
</dbReference>
<dbReference type="SUPFAM" id="SSF53383">
    <property type="entry name" value="PLP-dependent transferases"/>
    <property type="match status" value="1"/>
</dbReference>
<gene>
    <name evidence="1" type="primary">arnB</name>
    <name type="ordered locus">ETA_23830</name>
</gene>
<proteinExistence type="inferred from homology"/>